<name>TVP38_EREGS</name>
<protein>
    <recommendedName>
        <fullName>Golgi apparatus membrane protein TVP38</fullName>
    </recommendedName>
</protein>
<organism>
    <name type="scientific">Eremothecium gossypii (strain ATCC 10895 / CBS 109.51 / FGSC 9923 / NRRL Y-1056)</name>
    <name type="common">Yeast</name>
    <name type="synonym">Ashbya gossypii</name>
    <dbReference type="NCBI Taxonomy" id="284811"/>
    <lineage>
        <taxon>Eukaryota</taxon>
        <taxon>Fungi</taxon>
        <taxon>Dikarya</taxon>
        <taxon>Ascomycota</taxon>
        <taxon>Saccharomycotina</taxon>
        <taxon>Saccharomycetes</taxon>
        <taxon>Saccharomycetales</taxon>
        <taxon>Saccharomycetaceae</taxon>
        <taxon>Eremothecium</taxon>
    </lineage>
</organism>
<keyword id="KW-0333">Golgi apparatus</keyword>
<keyword id="KW-0472">Membrane</keyword>
<keyword id="KW-1185">Reference proteome</keyword>
<keyword id="KW-0812">Transmembrane</keyword>
<keyword id="KW-1133">Transmembrane helix</keyword>
<sequence length="307" mass="35133">MADHYEARTSSQGALNVDRRTSISNENFFDIEEEDFLDMYPLSARQRLIYQCKRSSRKLLNTFMDLPLWKRAAVLLLCGGATVSALVMMVFHKSILERMIKISNELRSWWYTPFIFFLLIFFVSFPPLIGFSMLCTSAGLVYGVSFKGWLIISLGTVLGSIAAFSVFKTVFRSYAERLIRLNDKFEALASILQDHNSYWIIALLRLCPFPYSLTNGAIAGVYGISIRNFSIAQVLTTPKLFMYLFIGSRLKNLGESSSTATKLFDILSILFAIIALTATASILYYKTKERYLELQRRNQDRFDTLNF</sequence>
<gene>
    <name type="primary">TVP38</name>
    <name type="ordered locus">ADR226C</name>
</gene>
<comment type="function">
    <text>Golgi membrane protein involved in vesicular trafficking and spindle migration.</text>
</comment>
<comment type="subcellular location">
    <subcellularLocation>
        <location>Golgi apparatus membrane</location>
        <topology>Multi-pass membrane protein</topology>
    </subcellularLocation>
</comment>
<comment type="domain">
    <text evidence="1">The VTT domain was previously called the SNARE-assoc domain. As there is no evidence that this domain associates with SNARE proteins, it was renamed as VMP1, TMEM41, and TVP38 (VTT) domain.</text>
</comment>
<comment type="similarity">
    <text evidence="3">Belongs to the TVP38/TMEM64 family.</text>
</comment>
<dbReference type="EMBL" id="AE016817">
    <property type="protein sequence ID" value="AAS52146.1"/>
    <property type="molecule type" value="Genomic_DNA"/>
</dbReference>
<dbReference type="RefSeq" id="NP_984322.1">
    <property type="nucleotide sequence ID" value="NM_209675.1"/>
</dbReference>
<dbReference type="FunCoup" id="Q759P7">
    <property type="interactions" value="121"/>
</dbReference>
<dbReference type="STRING" id="284811.Q759P7"/>
<dbReference type="EnsemblFungi" id="AAS52146">
    <property type="protein sequence ID" value="AAS52146"/>
    <property type="gene ID" value="AGOS_ADR226C"/>
</dbReference>
<dbReference type="GeneID" id="4620484"/>
<dbReference type="KEGG" id="ago:AGOS_ADR226C"/>
<dbReference type="eggNOG" id="KOG3140">
    <property type="taxonomic scope" value="Eukaryota"/>
</dbReference>
<dbReference type="HOGENOM" id="CLU_041954_1_1_1"/>
<dbReference type="InParanoid" id="Q759P7"/>
<dbReference type="OMA" id="KWQALET"/>
<dbReference type="OrthoDB" id="166803at2759"/>
<dbReference type="Proteomes" id="UP000000591">
    <property type="component" value="Chromosome IV"/>
</dbReference>
<dbReference type="GO" id="GO:0000139">
    <property type="term" value="C:Golgi membrane"/>
    <property type="evidence" value="ECO:0000318"/>
    <property type="project" value="GO_Central"/>
</dbReference>
<dbReference type="GO" id="GO:0000022">
    <property type="term" value="P:mitotic spindle elongation"/>
    <property type="evidence" value="ECO:0000318"/>
    <property type="project" value="GO_Central"/>
</dbReference>
<dbReference type="GO" id="GO:0016192">
    <property type="term" value="P:vesicle-mediated transport"/>
    <property type="evidence" value="ECO:0000318"/>
    <property type="project" value="GO_Central"/>
</dbReference>
<dbReference type="InterPro" id="IPR051076">
    <property type="entry name" value="Golgi_membrane_TVP38/TMEM64"/>
</dbReference>
<dbReference type="InterPro" id="IPR032816">
    <property type="entry name" value="VTT_dom"/>
</dbReference>
<dbReference type="PANTHER" id="PTHR47549:SF1">
    <property type="entry name" value="GOLGI APPARATUS MEMBRANE PROTEIN TVP38"/>
    <property type="match status" value="1"/>
</dbReference>
<dbReference type="PANTHER" id="PTHR47549">
    <property type="entry name" value="GOLGI APPARATUS MEMBRANE PROTEIN TVP38-RELATED"/>
    <property type="match status" value="1"/>
</dbReference>
<dbReference type="Pfam" id="PF09335">
    <property type="entry name" value="VTT_dom"/>
    <property type="match status" value="1"/>
</dbReference>
<accession>Q759P7</accession>
<reference key="1">
    <citation type="journal article" date="2004" name="Science">
        <title>The Ashbya gossypii genome as a tool for mapping the ancient Saccharomyces cerevisiae genome.</title>
        <authorList>
            <person name="Dietrich F.S."/>
            <person name="Voegeli S."/>
            <person name="Brachat S."/>
            <person name="Lerch A."/>
            <person name="Gates K."/>
            <person name="Steiner S."/>
            <person name="Mohr C."/>
            <person name="Poehlmann R."/>
            <person name="Luedi P."/>
            <person name="Choi S."/>
            <person name="Wing R.A."/>
            <person name="Flavier A."/>
            <person name="Gaffney T.D."/>
            <person name="Philippsen P."/>
        </authorList>
    </citation>
    <scope>NUCLEOTIDE SEQUENCE [LARGE SCALE GENOMIC DNA]</scope>
    <source>
        <strain>ATCC 10895 / CBS 109.51 / FGSC 9923 / NRRL Y-1056</strain>
    </source>
</reference>
<reference key="2">
    <citation type="journal article" date="2013" name="G3 (Bethesda)">
        <title>Genomes of Ashbya fungi isolated from insects reveal four mating-type loci, numerous translocations, lack of transposons, and distinct gene duplications.</title>
        <authorList>
            <person name="Dietrich F.S."/>
            <person name="Voegeli S."/>
            <person name="Kuo S."/>
            <person name="Philippsen P."/>
        </authorList>
    </citation>
    <scope>GENOME REANNOTATION</scope>
    <source>
        <strain>ATCC 10895 / CBS 109.51 / FGSC 9923 / NRRL Y-1056</strain>
    </source>
</reference>
<proteinExistence type="inferred from homology"/>
<feature type="chain" id="PRO_0000343059" description="Golgi apparatus membrane protein TVP38">
    <location>
        <begin position="1"/>
        <end position="307"/>
    </location>
</feature>
<feature type="topological domain" description="Lumenal" evidence="2">
    <location>
        <begin position="1"/>
        <end position="71"/>
    </location>
</feature>
<feature type="transmembrane region" description="Helical" evidence="2">
    <location>
        <begin position="72"/>
        <end position="92"/>
    </location>
</feature>
<feature type="topological domain" description="Cytoplasmic" evidence="2">
    <location>
        <begin position="93"/>
        <end position="113"/>
    </location>
</feature>
<feature type="transmembrane region" description="Helical" evidence="2">
    <location>
        <begin position="114"/>
        <end position="134"/>
    </location>
</feature>
<feature type="topological domain" description="Lumenal" evidence="2">
    <location>
        <begin position="135"/>
        <end position="143"/>
    </location>
</feature>
<feature type="transmembrane region" description="Helical" evidence="2">
    <location>
        <begin position="144"/>
        <end position="164"/>
    </location>
</feature>
<feature type="topological domain" description="Cytoplasmic" evidence="2">
    <location>
        <begin position="165"/>
        <end position="227"/>
    </location>
</feature>
<feature type="transmembrane region" description="Helical" evidence="2">
    <location>
        <begin position="228"/>
        <end position="248"/>
    </location>
</feature>
<feature type="topological domain" description="Lumenal" evidence="2">
    <location>
        <begin position="249"/>
        <end position="262"/>
    </location>
</feature>
<feature type="transmembrane region" description="Helical" evidence="2">
    <location>
        <begin position="263"/>
        <end position="283"/>
    </location>
</feature>
<feature type="topological domain" description="Cytoplasmic" evidence="2">
    <location>
        <begin position="284"/>
        <end position="307"/>
    </location>
</feature>
<feature type="region of interest" description="VTT domain" evidence="1">
    <location>
        <begin position="139"/>
        <end position="250"/>
    </location>
</feature>
<evidence type="ECO:0000250" key="1">
    <source>
        <dbReference type="UniProtKB" id="P36164"/>
    </source>
</evidence>
<evidence type="ECO:0000255" key="2"/>
<evidence type="ECO:0000305" key="3"/>